<comment type="function">
    <text evidence="1">An aminoacyl-tRNA editing enzyme that deacylates mischarged D-aminoacyl-tRNAs. Also deacylates mischarged glycyl-tRNA(Ala), protecting cells against glycine mischarging by AlaRS. Acts via tRNA-based rather than protein-based catalysis; rejects L-amino acids rather than detecting D-amino acids in the active site. By recycling D-aminoacyl-tRNA to D-amino acids and free tRNA molecules, this enzyme counteracts the toxicity associated with the formation of D-aminoacyl-tRNA entities in vivo and helps enforce protein L-homochirality.</text>
</comment>
<comment type="catalytic activity">
    <reaction evidence="1">
        <text>glycyl-tRNA(Ala) + H2O = tRNA(Ala) + glycine + H(+)</text>
        <dbReference type="Rhea" id="RHEA:53744"/>
        <dbReference type="Rhea" id="RHEA-COMP:9657"/>
        <dbReference type="Rhea" id="RHEA-COMP:13640"/>
        <dbReference type="ChEBI" id="CHEBI:15377"/>
        <dbReference type="ChEBI" id="CHEBI:15378"/>
        <dbReference type="ChEBI" id="CHEBI:57305"/>
        <dbReference type="ChEBI" id="CHEBI:78442"/>
        <dbReference type="ChEBI" id="CHEBI:78522"/>
        <dbReference type="EC" id="3.1.1.96"/>
    </reaction>
</comment>
<comment type="catalytic activity">
    <reaction evidence="1">
        <text>a D-aminoacyl-tRNA + H2O = a tRNA + a D-alpha-amino acid + H(+)</text>
        <dbReference type="Rhea" id="RHEA:13953"/>
        <dbReference type="Rhea" id="RHEA-COMP:10123"/>
        <dbReference type="Rhea" id="RHEA-COMP:10124"/>
        <dbReference type="ChEBI" id="CHEBI:15377"/>
        <dbReference type="ChEBI" id="CHEBI:15378"/>
        <dbReference type="ChEBI" id="CHEBI:59871"/>
        <dbReference type="ChEBI" id="CHEBI:78442"/>
        <dbReference type="ChEBI" id="CHEBI:79333"/>
        <dbReference type="EC" id="3.1.1.96"/>
    </reaction>
</comment>
<comment type="subunit">
    <text evidence="1">Homodimer.</text>
</comment>
<comment type="subcellular location">
    <subcellularLocation>
        <location evidence="1">Cytoplasm</location>
    </subcellularLocation>
</comment>
<comment type="domain">
    <text evidence="1">A Gly-cisPro motif from one monomer fits into the active site of the other monomer to allow specific chiral rejection of L-amino acids.</text>
</comment>
<comment type="similarity">
    <text evidence="1">Belongs to the DTD family.</text>
</comment>
<protein>
    <recommendedName>
        <fullName evidence="1">D-aminoacyl-tRNA deacylase</fullName>
        <shortName evidence="1">DTD</shortName>
        <ecNumber evidence="1">3.1.1.96</ecNumber>
    </recommendedName>
    <alternativeName>
        <fullName evidence="1">Gly-tRNA(Ala) deacylase</fullName>
    </alternativeName>
</protein>
<keyword id="KW-0963">Cytoplasm</keyword>
<keyword id="KW-0378">Hydrolase</keyword>
<keyword id="KW-1185">Reference proteome</keyword>
<keyword id="KW-0694">RNA-binding</keyword>
<keyword id="KW-0820">tRNA-binding</keyword>
<dbReference type="EC" id="3.1.1.96" evidence="1"/>
<dbReference type="EMBL" id="AE016958">
    <property type="protein sequence ID" value="AAS03940.1"/>
    <property type="molecule type" value="Genomic_DNA"/>
</dbReference>
<dbReference type="RefSeq" id="WP_003876603.1">
    <property type="nucleotide sequence ID" value="NZ_CP106873.1"/>
</dbReference>
<dbReference type="SMR" id="Q73ZI0"/>
<dbReference type="STRING" id="262316.MAP_1623c"/>
<dbReference type="KEGG" id="mpa:MAP_1623c"/>
<dbReference type="eggNOG" id="COG1490">
    <property type="taxonomic scope" value="Bacteria"/>
</dbReference>
<dbReference type="HOGENOM" id="CLU_076901_1_2_11"/>
<dbReference type="Proteomes" id="UP000000580">
    <property type="component" value="Chromosome"/>
</dbReference>
<dbReference type="GO" id="GO:0005737">
    <property type="term" value="C:cytoplasm"/>
    <property type="evidence" value="ECO:0007669"/>
    <property type="project" value="UniProtKB-SubCell"/>
</dbReference>
<dbReference type="GO" id="GO:0051500">
    <property type="term" value="F:D-tyrosyl-tRNA(Tyr) deacylase activity"/>
    <property type="evidence" value="ECO:0007669"/>
    <property type="project" value="TreeGrafter"/>
</dbReference>
<dbReference type="GO" id="GO:0106026">
    <property type="term" value="F:Gly-tRNA(Ala) deacylase activity"/>
    <property type="evidence" value="ECO:0007669"/>
    <property type="project" value="UniProtKB-UniRule"/>
</dbReference>
<dbReference type="GO" id="GO:0043908">
    <property type="term" value="F:Ser(Gly)-tRNA(Ala) hydrolase activity"/>
    <property type="evidence" value="ECO:0007669"/>
    <property type="project" value="UniProtKB-UniRule"/>
</dbReference>
<dbReference type="GO" id="GO:0000049">
    <property type="term" value="F:tRNA binding"/>
    <property type="evidence" value="ECO:0007669"/>
    <property type="project" value="UniProtKB-UniRule"/>
</dbReference>
<dbReference type="GO" id="GO:0019478">
    <property type="term" value="P:D-amino acid catabolic process"/>
    <property type="evidence" value="ECO:0007669"/>
    <property type="project" value="UniProtKB-UniRule"/>
</dbReference>
<dbReference type="FunFam" id="3.50.80.10:FF:000001">
    <property type="entry name" value="D-aminoacyl-tRNA deacylase"/>
    <property type="match status" value="1"/>
</dbReference>
<dbReference type="Gene3D" id="3.50.80.10">
    <property type="entry name" value="D-tyrosyl-tRNA(Tyr) deacylase"/>
    <property type="match status" value="1"/>
</dbReference>
<dbReference type="HAMAP" id="MF_00518">
    <property type="entry name" value="Deacylase_Dtd"/>
    <property type="match status" value="1"/>
</dbReference>
<dbReference type="InterPro" id="IPR003732">
    <property type="entry name" value="Daa-tRNA_deacyls_DTD"/>
</dbReference>
<dbReference type="InterPro" id="IPR023509">
    <property type="entry name" value="DTD-like_sf"/>
</dbReference>
<dbReference type="NCBIfam" id="TIGR00256">
    <property type="entry name" value="D-aminoacyl-tRNA deacylase"/>
    <property type="match status" value="1"/>
</dbReference>
<dbReference type="PANTHER" id="PTHR10472:SF5">
    <property type="entry name" value="D-AMINOACYL-TRNA DEACYLASE 1"/>
    <property type="match status" value="1"/>
</dbReference>
<dbReference type="PANTHER" id="PTHR10472">
    <property type="entry name" value="D-TYROSYL-TRNA TYR DEACYLASE"/>
    <property type="match status" value="1"/>
</dbReference>
<dbReference type="Pfam" id="PF02580">
    <property type="entry name" value="Tyr_Deacylase"/>
    <property type="match status" value="1"/>
</dbReference>
<dbReference type="SUPFAM" id="SSF69500">
    <property type="entry name" value="DTD-like"/>
    <property type="match status" value="1"/>
</dbReference>
<reference key="1">
    <citation type="journal article" date="2005" name="Proc. Natl. Acad. Sci. U.S.A.">
        <title>The complete genome sequence of Mycobacterium avium subspecies paratuberculosis.</title>
        <authorList>
            <person name="Li L."/>
            <person name="Bannantine J.P."/>
            <person name="Zhang Q."/>
            <person name="Amonsin A."/>
            <person name="May B.J."/>
            <person name="Alt D."/>
            <person name="Banerji N."/>
            <person name="Kanjilal S."/>
            <person name="Kapur V."/>
        </authorList>
    </citation>
    <scope>NUCLEOTIDE SEQUENCE [LARGE SCALE GENOMIC DNA]</scope>
    <source>
        <strain>ATCC BAA-968 / K-10</strain>
    </source>
</reference>
<feature type="chain" id="PRO_0000164561" description="D-aminoacyl-tRNA deacylase">
    <location>
        <begin position="1"/>
        <end position="143"/>
    </location>
</feature>
<feature type="short sequence motif" description="Gly-cisPro motif, important for rejection of L-amino acids" evidence="1">
    <location>
        <begin position="135"/>
        <end position="136"/>
    </location>
</feature>
<name>DTD_MYCPA</name>
<accession>Q73ZI0</accession>
<sequence>MRVLVQRVSSAAVTVEGAVVGALRPDSQGLLALVGVTHSDDRDKARRLAEKLWKLRILADERSASDVGAPILVVSQFTLYADTAKGRRPSWNAAAPAAIAEPLVTEFAAALQGLGADVQTGVFGANMQVELVNDGPVTVLLEL</sequence>
<proteinExistence type="inferred from homology"/>
<gene>
    <name evidence="1" type="primary">dtd</name>
    <name type="ordered locus">MAP_1623c</name>
</gene>
<evidence type="ECO:0000255" key="1">
    <source>
        <dbReference type="HAMAP-Rule" id="MF_00518"/>
    </source>
</evidence>
<organism>
    <name type="scientific">Mycolicibacterium paratuberculosis (strain ATCC BAA-968 / K-10)</name>
    <name type="common">Mycobacterium paratuberculosis</name>
    <dbReference type="NCBI Taxonomy" id="262316"/>
    <lineage>
        <taxon>Bacteria</taxon>
        <taxon>Bacillati</taxon>
        <taxon>Actinomycetota</taxon>
        <taxon>Actinomycetes</taxon>
        <taxon>Mycobacteriales</taxon>
        <taxon>Mycobacteriaceae</taxon>
        <taxon>Mycobacterium</taxon>
        <taxon>Mycobacterium avium complex (MAC)</taxon>
    </lineage>
</organism>